<evidence type="ECO:0000250" key="1"/>
<evidence type="ECO:0000255" key="2"/>
<evidence type="ECO:0000269" key="3">
    <source>
    </source>
</evidence>
<evidence type="ECO:0000305" key="4">
    <source>
    </source>
</evidence>
<dbReference type="EMBL" id="AABL01000353">
    <property type="protein sequence ID" value="EAA20644.1"/>
    <property type="molecule type" value="Genomic_DNA"/>
</dbReference>
<dbReference type="SMR" id="Q7RPW4"/>
<dbReference type="DIP" id="DIP-61878N"/>
<dbReference type="FunCoup" id="Q7RPW4">
    <property type="interactions" value="683"/>
</dbReference>
<dbReference type="STRING" id="73239.Q7RPW4"/>
<dbReference type="GlyCosmos" id="Q7RPW4">
    <property type="glycosylation" value="4 sites, No reported glycans"/>
</dbReference>
<dbReference type="PaxDb" id="73239-Q7RPW4"/>
<dbReference type="EnsemblProtists" id="EAA20644">
    <property type="protein sequence ID" value="EAA20644"/>
    <property type="gene ID" value="EAA20644"/>
</dbReference>
<dbReference type="KEGG" id="pyo:PY17X_1003500"/>
<dbReference type="VEuPathDB" id="PlasmoDB:Py17XNL_001002092"/>
<dbReference type="InParanoid" id="Q7RPW4"/>
<dbReference type="Proteomes" id="UP000008553">
    <property type="component" value="Unassembled WGS sequence"/>
</dbReference>
<dbReference type="GO" id="GO:0009986">
    <property type="term" value="C:cell surface"/>
    <property type="evidence" value="ECO:0007669"/>
    <property type="project" value="UniProtKB-SubCell"/>
</dbReference>
<dbReference type="GO" id="GO:0005886">
    <property type="term" value="C:plasma membrane"/>
    <property type="evidence" value="ECO:0007669"/>
    <property type="project" value="UniProtKB-SubCell"/>
</dbReference>
<dbReference type="Gene3D" id="2.60.40.2860">
    <property type="match status" value="2"/>
</dbReference>
<dbReference type="InterPro" id="IPR010884">
    <property type="entry name" value="6_CYS_dom"/>
</dbReference>
<dbReference type="InterPro" id="IPR038160">
    <property type="entry name" value="6_CYS_dom_sf"/>
</dbReference>
<dbReference type="InterPro" id="IPR051444">
    <property type="entry name" value="Parasite_Repro/Invasion_Surf"/>
</dbReference>
<dbReference type="PANTHER" id="PTHR38796">
    <property type="match status" value="1"/>
</dbReference>
<dbReference type="PANTHER" id="PTHR38796:SF1">
    <property type="entry name" value="ANCHORED PROTEIN, PUTATIVE (AFU_ORTHOLOGUE AFUA_4G09600)-RELATED"/>
    <property type="match status" value="1"/>
</dbReference>
<dbReference type="Pfam" id="PF07422">
    <property type="entry name" value="s48_45"/>
    <property type="match status" value="1"/>
</dbReference>
<dbReference type="SMART" id="SM00970">
    <property type="entry name" value="s48_45"/>
    <property type="match status" value="1"/>
</dbReference>
<dbReference type="PROSITE" id="PS51701">
    <property type="entry name" value="6_CYS"/>
    <property type="match status" value="2"/>
</dbReference>
<sequence length="310" mass="35356">MRKALYSLLFYMCICLYIYTPVFMANLKEIEVGNYFICNLRDYPTGNCSVDHDYNKTIKLLCPIVNNKNNSNKTYDPSYCFKYDGIKDEFIINNKQAYIHNTLPGVILTNNIENDTYNLSIYPPFVVKEDVTIVCICDSEKGNEGITPYLKINIKKTHGLNNDLEGDYIKGCDYGNNQGKYKFLTKPVKYTSNPICEIDAYPGDVVGINCNSYTTKMQGARLEPEGCFAMVYFSILTMKFIKTNVNNIMPNAKYYPDLASHPGNQNSKIFLTSYLLIPNEVDRDILIYCNCSYNGNKGLAIYRIFSTKAS</sequence>
<gene>
    <name type="primary">P36</name>
    <name type="ORF">PY01341</name>
</gene>
<keyword id="KW-1003">Cell membrane</keyword>
<keyword id="KW-1015">Disulfide bond</keyword>
<keyword id="KW-0325">Glycoprotein</keyword>
<keyword id="KW-0461">Malaria</keyword>
<keyword id="KW-0472">Membrane</keyword>
<keyword id="KW-1185">Reference proteome</keyword>
<keyword id="KW-0677">Repeat</keyword>
<keyword id="KW-0732">Signal</keyword>
<comment type="function">
    <text evidence="4">Involved in sporozoite infection of hepatocytes and replication therein.</text>
</comment>
<comment type="subcellular location">
    <subcellularLocation>
        <location evidence="1">Cell surface</location>
    </subcellularLocation>
    <subcellularLocation>
        <location evidence="1">Cell membrane</location>
    </subcellularLocation>
    <text evidence="1">Present on the surface of sporozoite.</text>
</comment>
<comment type="disruption phenotype">
    <text evidence="3">Cells lacking both P36 and P52/P36P show attenuated infection and do not form a parasitophorous vacuole within hepatocytes.</text>
</comment>
<accession>Q7RPW4</accession>
<feature type="signal peptide" evidence="2">
    <location>
        <begin position="1"/>
        <end position="24"/>
    </location>
</feature>
<feature type="chain" id="PRO_0000423572" description="Sporozoite surface protein P36">
    <location>
        <begin position="25"/>
        <end position="310"/>
    </location>
</feature>
<feature type="domain" description="6-Cys 1">
    <location>
        <begin position="25"/>
        <end position="157"/>
    </location>
</feature>
<feature type="domain" description="6-Cys 2">
    <location>
        <begin position="168"/>
        <end position="309"/>
    </location>
</feature>
<feature type="glycosylation site" description="N-linked (GlcNAc...) asparagine" evidence="2">
    <location>
        <position position="72"/>
    </location>
</feature>
<feature type="glycosylation site" description="N-linked (GlcNAc...) asparagine" evidence="2">
    <location>
        <position position="114"/>
    </location>
</feature>
<feature type="glycosylation site" description="N-linked (GlcNAc...) asparagine" evidence="2">
    <location>
        <position position="118"/>
    </location>
</feature>
<feature type="glycosylation site" description="N-linked (GlcNAc...) asparagine" evidence="2">
    <location>
        <position position="290"/>
    </location>
</feature>
<feature type="disulfide bond" evidence="1">
    <location>
        <begin position="38"/>
        <end position="48"/>
    </location>
</feature>
<feature type="disulfide bond" evidence="1">
    <location>
        <begin position="62"/>
        <end position="137"/>
    </location>
</feature>
<feature type="disulfide bond" evidence="1">
    <location>
        <begin position="80"/>
        <end position="135"/>
    </location>
</feature>
<feature type="disulfide bond" evidence="1">
    <location>
        <begin position="172"/>
        <end position="196"/>
    </location>
</feature>
<feature type="disulfide bond" evidence="1">
    <location>
        <begin position="210"/>
        <end position="291"/>
    </location>
</feature>
<feature type="disulfide bond" evidence="1">
    <location>
        <begin position="227"/>
        <end position="289"/>
    </location>
</feature>
<reference key="1">
    <citation type="journal article" date="2002" name="Nature">
        <title>Genome sequence and comparative analysis of the model rodent malaria parasite Plasmodium yoelii yoelii.</title>
        <authorList>
            <person name="Carlton J.M."/>
            <person name="Angiuoli S.V."/>
            <person name="Suh B.B."/>
            <person name="Kooij T.W."/>
            <person name="Pertea M."/>
            <person name="Silva J.C."/>
            <person name="Ermolaeva M.D."/>
            <person name="Allen J.E."/>
            <person name="Selengut J.D."/>
            <person name="Koo H.L."/>
            <person name="Peterson J.D."/>
            <person name="Pop M."/>
            <person name="Kosack D.S."/>
            <person name="Shumway M.F."/>
            <person name="Bidwell S.L."/>
            <person name="Shallom S.J."/>
            <person name="van Aken S.E."/>
            <person name="Riedmuller S.B."/>
            <person name="Feldblyum T.V."/>
            <person name="Cho J.K."/>
            <person name="Quackenbush J."/>
            <person name="Sedegah M."/>
            <person name="Shoaibi A."/>
            <person name="Cummings L.M."/>
            <person name="Florens L."/>
            <person name="Yates J.R. III"/>
            <person name="Raine J.D."/>
            <person name="Sinden R.E."/>
            <person name="Harris M.A."/>
            <person name="Cunningham D.A."/>
            <person name="Preiser P.R."/>
            <person name="Bergman L.W."/>
            <person name="Vaidya A.B."/>
            <person name="van Lin L.H."/>
            <person name="Janse C.J."/>
            <person name="Waters A.P."/>
            <person name="Smith H.O."/>
            <person name="White O.R."/>
            <person name="Salzberg S.L."/>
            <person name="Venter J.C."/>
            <person name="Fraser C.M."/>
            <person name="Hoffman S.L."/>
            <person name="Gardner M.J."/>
            <person name="Carucci D.J."/>
        </authorList>
    </citation>
    <scope>NUCLEOTIDE SEQUENCE [LARGE SCALE GENOMIC DNA]</scope>
    <source>
        <strain>17XNL</strain>
    </source>
</reference>
<reference key="2">
    <citation type="journal article" date="2007" name="Infect. Immun.">
        <title>Plasmodium yoelii sporozoites with simultaneous deletion of P52 and P36 are completely attenuated and confer sterile immunity against infection.</title>
        <authorList>
            <person name="Labaied M."/>
            <person name="Harupa A."/>
            <person name="Dumpit R.F."/>
            <person name="Coppens I."/>
            <person name="Mikolajczak S.A."/>
            <person name="Kappe S.H."/>
        </authorList>
    </citation>
    <scope>FUNCTION</scope>
    <scope>DISRUPTION PHENOTYPE</scope>
</reference>
<proteinExistence type="inferred from homology"/>
<protein>
    <recommendedName>
        <fullName>Sporozoite surface protein P36</fullName>
    </recommendedName>
</protein>
<name>PF36_PLAYO</name>
<organism>
    <name type="scientific">Plasmodium yoelii yoelii</name>
    <dbReference type="NCBI Taxonomy" id="73239"/>
    <lineage>
        <taxon>Eukaryota</taxon>
        <taxon>Sar</taxon>
        <taxon>Alveolata</taxon>
        <taxon>Apicomplexa</taxon>
        <taxon>Aconoidasida</taxon>
        <taxon>Haemosporida</taxon>
        <taxon>Plasmodiidae</taxon>
        <taxon>Plasmodium</taxon>
        <taxon>Plasmodium (Vinckeia)</taxon>
    </lineage>
</organism>